<dbReference type="EMBL" id="AF421961">
    <property type="protein sequence ID" value="AAQ04055.1"/>
    <property type="molecule type" value="Genomic_DNA"/>
</dbReference>
<dbReference type="EMBL" id="D84432">
    <property type="protein sequence ID" value="BAA12503.1"/>
    <property type="molecule type" value="Genomic_DNA"/>
</dbReference>
<dbReference type="EMBL" id="AL009126">
    <property type="protein sequence ID" value="CAB14436.1"/>
    <property type="molecule type" value="Genomic_DNA"/>
</dbReference>
<dbReference type="PIR" id="D69955">
    <property type="entry name" value="D69955"/>
</dbReference>
<dbReference type="RefSeq" id="NP_390385.1">
    <property type="nucleotide sequence ID" value="NC_000964.3"/>
</dbReference>
<dbReference type="RefSeq" id="WP_003230087.1">
    <property type="nucleotide sequence ID" value="NZ_OZ025638.1"/>
</dbReference>
<dbReference type="SMR" id="P54483"/>
<dbReference type="FunCoup" id="P54483">
    <property type="interactions" value="3"/>
</dbReference>
<dbReference type="STRING" id="224308.BSU25060"/>
<dbReference type="PaxDb" id="224308-BSU25060"/>
<dbReference type="DNASU" id="938027"/>
<dbReference type="EnsemblBacteria" id="CAB14436">
    <property type="protein sequence ID" value="CAB14436"/>
    <property type="gene ID" value="BSU_25060"/>
</dbReference>
<dbReference type="GeneID" id="938027"/>
<dbReference type="KEGG" id="bsu:BSU25060"/>
<dbReference type="PATRIC" id="fig|224308.179.peg.2725"/>
<dbReference type="eggNOG" id="COG1388">
    <property type="taxonomic scope" value="Bacteria"/>
</dbReference>
<dbReference type="InParanoid" id="P54483"/>
<dbReference type="OrthoDB" id="2691912at2"/>
<dbReference type="BioCyc" id="BSUB:BSU25060-MONOMER"/>
<dbReference type="Proteomes" id="UP000001570">
    <property type="component" value="Chromosome"/>
</dbReference>
<dbReference type="GO" id="GO:0005576">
    <property type="term" value="C:extracellular region"/>
    <property type="evidence" value="ECO:0007669"/>
    <property type="project" value="UniProtKB-KW"/>
</dbReference>
<dbReference type="GO" id="GO:0016020">
    <property type="term" value="C:membrane"/>
    <property type="evidence" value="ECO:0007669"/>
    <property type="project" value="UniProtKB-SubCell"/>
</dbReference>
<dbReference type="CDD" id="cd00118">
    <property type="entry name" value="LysM"/>
    <property type="match status" value="1"/>
</dbReference>
<dbReference type="Gene3D" id="3.10.350.10">
    <property type="entry name" value="LysM domain"/>
    <property type="match status" value="1"/>
</dbReference>
<dbReference type="InterPro" id="IPR018392">
    <property type="entry name" value="LysM_dom"/>
</dbReference>
<dbReference type="InterPro" id="IPR036779">
    <property type="entry name" value="LysM_dom_sf"/>
</dbReference>
<dbReference type="SMART" id="SM00257">
    <property type="entry name" value="LysM"/>
    <property type="match status" value="1"/>
</dbReference>
<dbReference type="PROSITE" id="PS51782">
    <property type="entry name" value="LYSM"/>
    <property type="match status" value="1"/>
</dbReference>
<evidence type="ECO:0000255" key="1"/>
<evidence type="ECO:0000255" key="2">
    <source>
        <dbReference type="PROSITE-ProRule" id="PRU01118"/>
    </source>
</evidence>
<evidence type="ECO:0000269" key="3">
    <source ref="1"/>
</evidence>
<feature type="chain" id="PRO_0000049803" description="Uncharacterized protein YqfZ">
    <location>
        <begin position="1"/>
        <end position="99"/>
    </location>
</feature>
<feature type="transmembrane region" description="Helical" evidence="1">
    <location>
        <begin position="6"/>
        <end position="26"/>
    </location>
</feature>
<feature type="domain" description="LysM" evidence="2">
    <location>
        <begin position="48"/>
        <end position="95"/>
    </location>
</feature>
<keyword id="KW-0134">Cell wall</keyword>
<keyword id="KW-0472">Membrane</keyword>
<keyword id="KW-1185">Reference proteome</keyword>
<keyword id="KW-0964">Secreted</keyword>
<keyword id="KW-0812">Transmembrane</keyword>
<keyword id="KW-1133">Transmembrane helix</keyword>
<comment type="subcellular location">
    <subcellularLocation>
        <location evidence="3">Secreted</location>
        <location evidence="3">Cell wall</location>
    </subcellularLocation>
    <subcellularLocation>
        <location evidence="3">Membrane</location>
        <topology evidence="3">Single-pass membrane protein</topology>
    </subcellularLocation>
</comment>
<sequence>MKRLTLVCSIVFILFILFYDLKIGTIPIQDLPVYEASAKTAVQEPAYKTVKVKPGDTVMSIVGSAGSPDDIVKDFEALNPNVKANAIQAGTAYKFPVYP</sequence>
<reference key="1">
    <citation type="submission" date="2001-09" db="EMBL/GenBank/DDBJ databases">
        <title>An orphan gene encodes a highly expressed cell wall binding protein presents only in Bacillus subtilis subsp subtilis.</title>
        <authorList>
            <person name="Margot P."/>
        </authorList>
    </citation>
    <scope>NUCLEOTIDE SEQUENCE [GENOMIC DNA]</scope>
    <scope>SUBCELLULAR LOCATION</scope>
    <source>
        <strain>168 / Marburg / ATCC 6051 / DSM 10 / JCM 1465 / NBRC 13719 / NCIMB 3610 / NRRL NRS-744 / VKM B-501</strain>
    </source>
</reference>
<reference key="2">
    <citation type="journal article" date="1996" name="Microbiology">
        <title>Systematic sequencing of the 283 kb 210 degrees-232 degrees region of the Bacillus subtilis genome containing the skin element and many sporulation genes.</title>
        <authorList>
            <person name="Mizuno M."/>
            <person name="Masuda S."/>
            <person name="Takemaru K."/>
            <person name="Hosono S."/>
            <person name="Sato T."/>
            <person name="Takeuchi M."/>
            <person name="Kobayashi Y."/>
        </authorList>
    </citation>
    <scope>NUCLEOTIDE SEQUENCE [GENOMIC DNA]</scope>
    <source>
        <strain>168 / JH642</strain>
    </source>
</reference>
<reference key="3">
    <citation type="journal article" date="1997" name="Nature">
        <title>The complete genome sequence of the Gram-positive bacterium Bacillus subtilis.</title>
        <authorList>
            <person name="Kunst F."/>
            <person name="Ogasawara N."/>
            <person name="Moszer I."/>
            <person name="Albertini A.M."/>
            <person name="Alloni G."/>
            <person name="Azevedo V."/>
            <person name="Bertero M.G."/>
            <person name="Bessieres P."/>
            <person name="Bolotin A."/>
            <person name="Borchert S."/>
            <person name="Borriss R."/>
            <person name="Boursier L."/>
            <person name="Brans A."/>
            <person name="Braun M."/>
            <person name="Brignell S.C."/>
            <person name="Bron S."/>
            <person name="Brouillet S."/>
            <person name="Bruschi C.V."/>
            <person name="Caldwell B."/>
            <person name="Capuano V."/>
            <person name="Carter N.M."/>
            <person name="Choi S.-K."/>
            <person name="Codani J.-J."/>
            <person name="Connerton I.F."/>
            <person name="Cummings N.J."/>
            <person name="Daniel R.A."/>
            <person name="Denizot F."/>
            <person name="Devine K.M."/>
            <person name="Duesterhoeft A."/>
            <person name="Ehrlich S.D."/>
            <person name="Emmerson P.T."/>
            <person name="Entian K.-D."/>
            <person name="Errington J."/>
            <person name="Fabret C."/>
            <person name="Ferrari E."/>
            <person name="Foulger D."/>
            <person name="Fritz C."/>
            <person name="Fujita M."/>
            <person name="Fujita Y."/>
            <person name="Fuma S."/>
            <person name="Galizzi A."/>
            <person name="Galleron N."/>
            <person name="Ghim S.-Y."/>
            <person name="Glaser P."/>
            <person name="Goffeau A."/>
            <person name="Golightly E.J."/>
            <person name="Grandi G."/>
            <person name="Guiseppi G."/>
            <person name="Guy B.J."/>
            <person name="Haga K."/>
            <person name="Haiech J."/>
            <person name="Harwood C.R."/>
            <person name="Henaut A."/>
            <person name="Hilbert H."/>
            <person name="Holsappel S."/>
            <person name="Hosono S."/>
            <person name="Hullo M.-F."/>
            <person name="Itaya M."/>
            <person name="Jones L.-M."/>
            <person name="Joris B."/>
            <person name="Karamata D."/>
            <person name="Kasahara Y."/>
            <person name="Klaerr-Blanchard M."/>
            <person name="Klein C."/>
            <person name="Kobayashi Y."/>
            <person name="Koetter P."/>
            <person name="Koningstein G."/>
            <person name="Krogh S."/>
            <person name="Kumano M."/>
            <person name="Kurita K."/>
            <person name="Lapidus A."/>
            <person name="Lardinois S."/>
            <person name="Lauber J."/>
            <person name="Lazarevic V."/>
            <person name="Lee S.-M."/>
            <person name="Levine A."/>
            <person name="Liu H."/>
            <person name="Masuda S."/>
            <person name="Mauel C."/>
            <person name="Medigue C."/>
            <person name="Medina N."/>
            <person name="Mellado R.P."/>
            <person name="Mizuno M."/>
            <person name="Moestl D."/>
            <person name="Nakai S."/>
            <person name="Noback M."/>
            <person name="Noone D."/>
            <person name="O'Reilly M."/>
            <person name="Ogawa K."/>
            <person name="Ogiwara A."/>
            <person name="Oudega B."/>
            <person name="Park S.-H."/>
            <person name="Parro V."/>
            <person name="Pohl T.M."/>
            <person name="Portetelle D."/>
            <person name="Porwollik S."/>
            <person name="Prescott A.M."/>
            <person name="Presecan E."/>
            <person name="Pujic P."/>
            <person name="Purnelle B."/>
            <person name="Rapoport G."/>
            <person name="Rey M."/>
            <person name="Reynolds S."/>
            <person name="Rieger M."/>
            <person name="Rivolta C."/>
            <person name="Rocha E."/>
            <person name="Roche B."/>
            <person name="Rose M."/>
            <person name="Sadaie Y."/>
            <person name="Sato T."/>
            <person name="Scanlan E."/>
            <person name="Schleich S."/>
            <person name="Schroeter R."/>
            <person name="Scoffone F."/>
            <person name="Sekiguchi J."/>
            <person name="Sekowska A."/>
            <person name="Seror S.J."/>
            <person name="Serror P."/>
            <person name="Shin B.-S."/>
            <person name="Soldo B."/>
            <person name="Sorokin A."/>
            <person name="Tacconi E."/>
            <person name="Takagi T."/>
            <person name="Takahashi H."/>
            <person name="Takemaru K."/>
            <person name="Takeuchi M."/>
            <person name="Tamakoshi A."/>
            <person name="Tanaka T."/>
            <person name="Terpstra P."/>
            <person name="Tognoni A."/>
            <person name="Tosato V."/>
            <person name="Uchiyama S."/>
            <person name="Vandenbol M."/>
            <person name="Vannier F."/>
            <person name="Vassarotti A."/>
            <person name="Viari A."/>
            <person name="Wambutt R."/>
            <person name="Wedler E."/>
            <person name="Wedler H."/>
            <person name="Weitzenegger T."/>
            <person name="Winters P."/>
            <person name="Wipat A."/>
            <person name="Yamamoto H."/>
            <person name="Yamane K."/>
            <person name="Yasumoto K."/>
            <person name="Yata K."/>
            <person name="Yoshida K."/>
            <person name="Yoshikawa H.-F."/>
            <person name="Zumstein E."/>
            <person name="Yoshikawa H."/>
            <person name="Danchin A."/>
        </authorList>
    </citation>
    <scope>NUCLEOTIDE SEQUENCE [LARGE SCALE GENOMIC DNA]</scope>
    <source>
        <strain>168</strain>
    </source>
</reference>
<organism>
    <name type="scientific">Bacillus subtilis (strain 168)</name>
    <dbReference type="NCBI Taxonomy" id="224308"/>
    <lineage>
        <taxon>Bacteria</taxon>
        <taxon>Bacillati</taxon>
        <taxon>Bacillota</taxon>
        <taxon>Bacilli</taxon>
        <taxon>Bacillales</taxon>
        <taxon>Bacillaceae</taxon>
        <taxon>Bacillus</taxon>
    </lineage>
</organism>
<name>YQFZ_BACSU</name>
<gene>
    <name type="primary">yqfZ</name>
    <name type="ordered locus">BSU25060</name>
</gene>
<accession>P54483</accession>
<protein>
    <recommendedName>
        <fullName>Uncharacterized protein YqfZ</fullName>
    </recommendedName>
</protein>
<proteinExistence type="predicted"/>